<sequence length="83" mass="9286">MAELGEADEAELQRLVAAEQQKAQFTAQVHHFMELCWDKCVEKPGSRLDSRTENCLSSCVDRFIDTTLAITGRFAQIVQKGGQ</sequence>
<name>TIM8B_MOUSE</name>
<proteinExistence type="evidence at protein level"/>
<reference key="1">
    <citation type="journal article" date="1999" name="FEBS Lett.">
        <title>The mitochondrial TIM22 preprotein translocase is highly conserved throughout the eukaryotic kingdom.</title>
        <authorList>
            <person name="Bauer M.F."/>
            <person name="Rothbauer U."/>
            <person name="Muehlenbein N."/>
            <person name="Smith R.J.H."/>
            <person name="Gerbitz K.-D."/>
            <person name="Neupert W."/>
            <person name="Brunner M."/>
            <person name="Hofmann S."/>
        </authorList>
    </citation>
    <scope>NUCLEOTIDE SEQUENCE [MRNA]</scope>
</reference>
<reference key="2">
    <citation type="journal article" date="2005" name="Science">
        <title>The transcriptional landscape of the mammalian genome.</title>
        <authorList>
            <person name="Carninci P."/>
            <person name="Kasukawa T."/>
            <person name="Katayama S."/>
            <person name="Gough J."/>
            <person name="Frith M.C."/>
            <person name="Maeda N."/>
            <person name="Oyama R."/>
            <person name="Ravasi T."/>
            <person name="Lenhard B."/>
            <person name="Wells C."/>
            <person name="Kodzius R."/>
            <person name="Shimokawa K."/>
            <person name="Bajic V.B."/>
            <person name="Brenner S.E."/>
            <person name="Batalov S."/>
            <person name="Forrest A.R."/>
            <person name="Zavolan M."/>
            <person name="Davis M.J."/>
            <person name="Wilming L.G."/>
            <person name="Aidinis V."/>
            <person name="Allen J.E."/>
            <person name="Ambesi-Impiombato A."/>
            <person name="Apweiler R."/>
            <person name="Aturaliya R.N."/>
            <person name="Bailey T.L."/>
            <person name="Bansal M."/>
            <person name="Baxter L."/>
            <person name="Beisel K.W."/>
            <person name="Bersano T."/>
            <person name="Bono H."/>
            <person name="Chalk A.M."/>
            <person name="Chiu K.P."/>
            <person name="Choudhary V."/>
            <person name="Christoffels A."/>
            <person name="Clutterbuck D.R."/>
            <person name="Crowe M.L."/>
            <person name="Dalla E."/>
            <person name="Dalrymple B.P."/>
            <person name="de Bono B."/>
            <person name="Della Gatta G."/>
            <person name="di Bernardo D."/>
            <person name="Down T."/>
            <person name="Engstrom P."/>
            <person name="Fagiolini M."/>
            <person name="Faulkner G."/>
            <person name="Fletcher C.F."/>
            <person name="Fukushima T."/>
            <person name="Furuno M."/>
            <person name="Futaki S."/>
            <person name="Gariboldi M."/>
            <person name="Georgii-Hemming P."/>
            <person name="Gingeras T.R."/>
            <person name="Gojobori T."/>
            <person name="Green R.E."/>
            <person name="Gustincich S."/>
            <person name="Harbers M."/>
            <person name="Hayashi Y."/>
            <person name="Hensch T.K."/>
            <person name="Hirokawa N."/>
            <person name="Hill D."/>
            <person name="Huminiecki L."/>
            <person name="Iacono M."/>
            <person name="Ikeo K."/>
            <person name="Iwama A."/>
            <person name="Ishikawa T."/>
            <person name="Jakt M."/>
            <person name="Kanapin A."/>
            <person name="Katoh M."/>
            <person name="Kawasawa Y."/>
            <person name="Kelso J."/>
            <person name="Kitamura H."/>
            <person name="Kitano H."/>
            <person name="Kollias G."/>
            <person name="Krishnan S.P."/>
            <person name="Kruger A."/>
            <person name="Kummerfeld S.K."/>
            <person name="Kurochkin I.V."/>
            <person name="Lareau L.F."/>
            <person name="Lazarevic D."/>
            <person name="Lipovich L."/>
            <person name="Liu J."/>
            <person name="Liuni S."/>
            <person name="McWilliam S."/>
            <person name="Madan Babu M."/>
            <person name="Madera M."/>
            <person name="Marchionni L."/>
            <person name="Matsuda H."/>
            <person name="Matsuzawa S."/>
            <person name="Miki H."/>
            <person name="Mignone F."/>
            <person name="Miyake S."/>
            <person name="Morris K."/>
            <person name="Mottagui-Tabar S."/>
            <person name="Mulder N."/>
            <person name="Nakano N."/>
            <person name="Nakauchi H."/>
            <person name="Ng P."/>
            <person name="Nilsson R."/>
            <person name="Nishiguchi S."/>
            <person name="Nishikawa S."/>
            <person name="Nori F."/>
            <person name="Ohara O."/>
            <person name="Okazaki Y."/>
            <person name="Orlando V."/>
            <person name="Pang K.C."/>
            <person name="Pavan W.J."/>
            <person name="Pavesi G."/>
            <person name="Pesole G."/>
            <person name="Petrovsky N."/>
            <person name="Piazza S."/>
            <person name="Reed J."/>
            <person name="Reid J.F."/>
            <person name="Ring B.Z."/>
            <person name="Ringwald M."/>
            <person name="Rost B."/>
            <person name="Ruan Y."/>
            <person name="Salzberg S.L."/>
            <person name="Sandelin A."/>
            <person name="Schneider C."/>
            <person name="Schoenbach C."/>
            <person name="Sekiguchi K."/>
            <person name="Semple C.A."/>
            <person name="Seno S."/>
            <person name="Sessa L."/>
            <person name="Sheng Y."/>
            <person name="Shibata Y."/>
            <person name="Shimada H."/>
            <person name="Shimada K."/>
            <person name="Silva D."/>
            <person name="Sinclair B."/>
            <person name="Sperling S."/>
            <person name="Stupka E."/>
            <person name="Sugiura K."/>
            <person name="Sultana R."/>
            <person name="Takenaka Y."/>
            <person name="Taki K."/>
            <person name="Tammoja K."/>
            <person name="Tan S.L."/>
            <person name="Tang S."/>
            <person name="Taylor M.S."/>
            <person name="Tegner J."/>
            <person name="Teichmann S.A."/>
            <person name="Ueda H.R."/>
            <person name="van Nimwegen E."/>
            <person name="Verardo R."/>
            <person name="Wei C.L."/>
            <person name="Yagi K."/>
            <person name="Yamanishi H."/>
            <person name="Zabarovsky E."/>
            <person name="Zhu S."/>
            <person name="Zimmer A."/>
            <person name="Hide W."/>
            <person name="Bult C."/>
            <person name="Grimmond S.M."/>
            <person name="Teasdale R.D."/>
            <person name="Liu E.T."/>
            <person name="Brusic V."/>
            <person name="Quackenbush J."/>
            <person name="Wahlestedt C."/>
            <person name="Mattick J.S."/>
            <person name="Hume D.A."/>
            <person name="Kai C."/>
            <person name="Sasaki D."/>
            <person name="Tomaru Y."/>
            <person name="Fukuda S."/>
            <person name="Kanamori-Katayama M."/>
            <person name="Suzuki M."/>
            <person name="Aoki J."/>
            <person name="Arakawa T."/>
            <person name="Iida J."/>
            <person name="Imamura K."/>
            <person name="Itoh M."/>
            <person name="Kato T."/>
            <person name="Kawaji H."/>
            <person name="Kawagashira N."/>
            <person name="Kawashima T."/>
            <person name="Kojima M."/>
            <person name="Kondo S."/>
            <person name="Konno H."/>
            <person name="Nakano K."/>
            <person name="Ninomiya N."/>
            <person name="Nishio T."/>
            <person name="Okada M."/>
            <person name="Plessy C."/>
            <person name="Shibata K."/>
            <person name="Shiraki T."/>
            <person name="Suzuki S."/>
            <person name="Tagami M."/>
            <person name="Waki K."/>
            <person name="Watahiki A."/>
            <person name="Okamura-Oho Y."/>
            <person name="Suzuki H."/>
            <person name="Kawai J."/>
            <person name="Hayashizaki Y."/>
        </authorList>
    </citation>
    <scope>NUCLEOTIDE SEQUENCE [LARGE SCALE MRNA]</scope>
    <source>
        <strain>C57BL/6J</strain>
        <tissue>Head</tissue>
        <tissue>Heart</tissue>
        <tissue>Kidney</tissue>
    </source>
</reference>
<reference key="3">
    <citation type="journal article" date="2004" name="Genome Res.">
        <title>The status, quality, and expansion of the NIH full-length cDNA project: the Mammalian Gene Collection (MGC).</title>
        <authorList>
            <consortium name="The MGC Project Team"/>
        </authorList>
    </citation>
    <scope>NUCLEOTIDE SEQUENCE [LARGE SCALE MRNA]</scope>
    <source>
        <strain>FVB/N</strain>
        <tissue>Kidney</tissue>
    </source>
</reference>
<reference key="4">
    <citation type="journal article" date="2010" name="Cell">
        <title>A tissue-specific atlas of mouse protein phosphorylation and expression.</title>
        <authorList>
            <person name="Huttlin E.L."/>
            <person name="Jedrychowski M.P."/>
            <person name="Elias J.E."/>
            <person name="Goswami T."/>
            <person name="Rad R."/>
            <person name="Beausoleil S.A."/>
            <person name="Villen J."/>
            <person name="Haas W."/>
            <person name="Sowa M.E."/>
            <person name="Gygi S.P."/>
        </authorList>
    </citation>
    <scope>IDENTIFICATION BY MASS SPECTROMETRY [LARGE SCALE ANALYSIS]</scope>
    <source>
        <tissue>Brain</tissue>
        <tissue>Brown adipose tissue</tissue>
        <tissue>Heart</tissue>
        <tissue>Kidney</tissue>
        <tissue>Liver</tissue>
        <tissue>Lung</tissue>
        <tissue>Pancreas</tissue>
        <tissue>Testis</tissue>
    </source>
</reference>
<accession>P62077</accession>
<accession>Q3TF77</accession>
<accession>Q9QUT4</accession>
<gene>
    <name type="primary">Timm8b</name>
    <name type="synonym">Ddp2</name>
    <name type="synonym">Tim8b</name>
</gene>
<comment type="function">
    <text evidence="1">Probable mitochondrial intermembrane chaperone that participates in the import and insertion of some multi-pass transmembrane proteins into the mitochondrial inner membrane. Also required for the transfer of beta-barrel precursors from the TOM complex to the sorting and assembly machinery (SAM complex) of the outer membrane. Acts as a chaperone-like protein that protects the hydrophobic precursors from aggregation and guide them through the mitochondrial intermembrane space (By similarity).</text>
</comment>
<comment type="subunit">
    <text evidence="1">Heterohexamer; possibly composed of 3 copies of TIMM8B and 3 copies of TIMM13, named soluble 70 kDa complex. Associates with the TIM22 complex, whose core is composed of TIMM22 (By similarity).</text>
</comment>
<comment type="subcellular location">
    <subcellularLocation>
        <location evidence="1">Mitochondrion inner membrane</location>
        <topology evidence="1">Peripheral membrane protein</topology>
        <orientation evidence="1">Intermembrane side</orientation>
    </subcellularLocation>
</comment>
<comment type="domain">
    <text evidence="1">The twin CX3C motif contains 4 conserved Cys residues that form 2 disulfide bonds in the mitochondrial intermembrane space. However, during the transit of TIMM8B from cytoplasm into mitochondrion, the Cys residues probably coordinate zinc, thereby preventing folding and allowing its transfer across mitochondrial outer membrane (By similarity).</text>
</comment>
<comment type="similarity">
    <text evidence="3">Belongs to the small Tim family.</text>
</comment>
<evidence type="ECO:0000250" key="1"/>
<evidence type="ECO:0000250" key="2">
    <source>
        <dbReference type="UniProtKB" id="Q9Y5J9"/>
    </source>
</evidence>
<evidence type="ECO:0000305" key="3"/>
<protein>
    <recommendedName>
        <fullName>Mitochondrial import inner membrane translocase subunit Tim8 B</fullName>
    </recommendedName>
    <alternativeName>
        <fullName>Deafness dystonia protein 2 homolog</fullName>
    </alternativeName>
</protein>
<organism>
    <name type="scientific">Mus musculus</name>
    <name type="common">Mouse</name>
    <dbReference type="NCBI Taxonomy" id="10090"/>
    <lineage>
        <taxon>Eukaryota</taxon>
        <taxon>Metazoa</taxon>
        <taxon>Chordata</taxon>
        <taxon>Craniata</taxon>
        <taxon>Vertebrata</taxon>
        <taxon>Euteleostomi</taxon>
        <taxon>Mammalia</taxon>
        <taxon>Eutheria</taxon>
        <taxon>Euarchontoglires</taxon>
        <taxon>Glires</taxon>
        <taxon>Rodentia</taxon>
        <taxon>Myomorpha</taxon>
        <taxon>Muroidea</taxon>
        <taxon>Muridae</taxon>
        <taxon>Murinae</taxon>
        <taxon>Mus</taxon>
        <taxon>Mus</taxon>
    </lineage>
</organism>
<keyword id="KW-0007">Acetylation</keyword>
<keyword id="KW-0143">Chaperone</keyword>
<keyword id="KW-1015">Disulfide bond</keyword>
<keyword id="KW-0472">Membrane</keyword>
<keyword id="KW-0479">Metal-binding</keyword>
<keyword id="KW-0496">Mitochondrion</keyword>
<keyword id="KW-0999">Mitochondrion inner membrane</keyword>
<keyword id="KW-0653">Protein transport</keyword>
<keyword id="KW-1185">Reference proteome</keyword>
<keyword id="KW-0811">Translocation</keyword>
<keyword id="KW-0813">Transport</keyword>
<keyword id="KW-0862">Zinc</keyword>
<dbReference type="EMBL" id="AF196314">
    <property type="protein sequence ID" value="AAF13228.1"/>
    <property type="molecule type" value="mRNA"/>
</dbReference>
<dbReference type="EMBL" id="AK003382">
    <property type="protein sequence ID" value="BAB22753.1"/>
    <property type="molecule type" value="mRNA"/>
</dbReference>
<dbReference type="EMBL" id="AK004190">
    <property type="protein sequence ID" value="BAB23213.1"/>
    <property type="molecule type" value="mRNA"/>
</dbReference>
<dbReference type="EMBL" id="AK012925">
    <property type="protein sequence ID" value="BAB28552.1"/>
    <property type="molecule type" value="mRNA"/>
</dbReference>
<dbReference type="EMBL" id="AK169258">
    <property type="protein sequence ID" value="BAE41021.1"/>
    <property type="molecule type" value="mRNA"/>
</dbReference>
<dbReference type="EMBL" id="AK018718">
    <property type="protein sequence ID" value="BAB31364.1"/>
    <property type="molecule type" value="mRNA"/>
</dbReference>
<dbReference type="EMBL" id="AK019422">
    <property type="protein sequence ID" value="BAB31713.1"/>
    <property type="molecule type" value="mRNA"/>
</dbReference>
<dbReference type="EMBL" id="BC029239">
    <property type="protein sequence ID" value="AAH29239.1"/>
    <property type="molecule type" value="mRNA"/>
</dbReference>
<dbReference type="CCDS" id="CCDS40624.1"/>
<dbReference type="RefSeq" id="NP_038925.1">
    <property type="nucleotide sequence ID" value="NM_013897.3"/>
</dbReference>
<dbReference type="SMR" id="P62077"/>
<dbReference type="BioGRID" id="205959">
    <property type="interactions" value="8"/>
</dbReference>
<dbReference type="FunCoup" id="P62077">
    <property type="interactions" value="2064"/>
</dbReference>
<dbReference type="IntAct" id="P62077">
    <property type="interactions" value="1"/>
</dbReference>
<dbReference type="STRING" id="10090.ENSMUSP00000039335"/>
<dbReference type="iPTMnet" id="P62077"/>
<dbReference type="PhosphoSitePlus" id="P62077"/>
<dbReference type="jPOST" id="P62077"/>
<dbReference type="PaxDb" id="10090-ENSMUSP00000039335"/>
<dbReference type="PeptideAtlas" id="P62077"/>
<dbReference type="ProteomicsDB" id="262822"/>
<dbReference type="Pumba" id="P62077"/>
<dbReference type="Antibodypedia" id="32120">
    <property type="antibodies" value="85 antibodies from 15 providers"/>
</dbReference>
<dbReference type="DNASU" id="30057"/>
<dbReference type="Ensembl" id="ENSMUST00000044051.6">
    <property type="protein sequence ID" value="ENSMUSP00000039335.5"/>
    <property type="gene ID" value="ENSMUSG00000039016.6"/>
</dbReference>
<dbReference type="GeneID" id="30057"/>
<dbReference type="KEGG" id="mmu:30057"/>
<dbReference type="UCSC" id="uc009pjw.2">
    <property type="organism name" value="mouse"/>
</dbReference>
<dbReference type="AGR" id="MGI:1353424"/>
<dbReference type="CTD" id="26521"/>
<dbReference type="MGI" id="MGI:1353424">
    <property type="gene designation" value="Timm8b"/>
</dbReference>
<dbReference type="VEuPathDB" id="HostDB:ENSMUSG00000039016"/>
<dbReference type="eggNOG" id="KOG3489">
    <property type="taxonomic scope" value="Eukaryota"/>
</dbReference>
<dbReference type="GeneTree" id="ENSGT00940000155479"/>
<dbReference type="HOGENOM" id="CLU_141397_1_2_1"/>
<dbReference type="InParanoid" id="P62077"/>
<dbReference type="OMA" id="NEICWDK"/>
<dbReference type="OrthoDB" id="344165at2759"/>
<dbReference type="PhylomeDB" id="P62077"/>
<dbReference type="TreeFam" id="TF106191"/>
<dbReference type="BioGRID-ORCS" id="30057">
    <property type="hits" value="3 hits in 77 CRISPR screens"/>
</dbReference>
<dbReference type="ChiTaRS" id="Timm8b">
    <property type="organism name" value="mouse"/>
</dbReference>
<dbReference type="PRO" id="PR:P62077"/>
<dbReference type="Proteomes" id="UP000000589">
    <property type="component" value="Chromosome 9"/>
</dbReference>
<dbReference type="RNAct" id="P62077">
    <property type="molecule type" value="protein"/>
</dbReference>
<dbReference type="Bgee" id="ENSMUSG00000039016">
    <property type="expression patterns" value="Expressed in right kidney and 291 other cell types or tissues"/>
</dbReference>
<dbReference type="GO" id="GO:0005743">
    <property type="term" value="C:mitochondrial inner membrane"/>
    <property type="evidence" value="ECO:0007669"/>
    <property type="project" value="UniProtKB-SubCell"/>
</dbReference>
<dbReference type="GO" id="GO:0005739">
    <property type="term" value="C:mitochondrion"/>
    <property type="evidence" value="ECO:0007005"/>
    <property type="project" value="MGI"/>
</dbReference>
<dbReference type="GO" id="GO:0046872">
    <property type="term" value="F:metal ion binding"/>
    <property type="evidence" value="ECO:0007669"/>
    <property type="project" value="UniProtKB-KW"/>
</dbReference>
<dbReference type="GO" id="GO:0015031">
    <property type="term" value="P:protein transport"/>
    <property type="evidence" value="ECO:0007669"/>
    <property type="project" value="UniProtKB-KW"/>
</dbReference>
<dbReference type="FunFam" id="1.10.287.810:FF:000005">
    <property type="entry name" value="Mitochondrial import inner membrane translocase subunit Tim8 B"/>
    <property type="match status" value="1"/>
</dbReference>
<dbReference type="Gene3D" id="1.10.287.810">
    <property type="entry name" value="Mitochondrial import inner membrane translocase subunit tim13 like domains"/>
    <property type="match status" value="1"/>
</dbReference>
<dbReference type="InterPro" id="IPR004217">
    <property type="entry name" value="Tim10-like"/>
</dbReference>
<dbReference type="InterPro" id="IPR035427">
    <property type="entry name" value="Tim10-like_dom_sf"/>
</dbReference>
<dbReference type="Pfam" id="PF02953">
    <property type="entry name" value="zf-Tim10_DDP"/>
    <property type="match status" value="1"/>
</dbReference>
<dbReference type="SUPFAM" id="SSF144122">
    <property type="entry name" value="Tim10-like"/>
    <property type="match status" value="1"/>
</dbReference>
<feature type="initiator methionine" description="Removed" evidence="2">
    <location>
        <position position="1"/>
    </location>
</feature>
<feature type="chain" id="PRO_0000193588" description="Mitochondrial import inner membrane translocase subunit Tim8 B">
    <location>
        <begin position="2"/>
        <end position="83"/>
    </location>
</feature>
<feature type="short sequence motif" description="Twin CX3C motif">
    <location>
        <begin position="36"/>
        <end position="59"/>
    </location>
</feature>
<feature type="modified residue" description="N-acetylalanine" evidence="2">
    <location>
        <position position="2"/>
    </location>
</feature>
<feature type="disulfide bond" evidence="1">
    <location>
        <begin position="36"/>
        <end position="59"/>
    </location>
</feature>
<feature type="disulfide bond" evidence="1">
    <location>
        <begin position="40"/>
        <end position="55"/>
    </location>
</feature>